<comment type="similarity">
    <text evidence="1">Belongs to the bacterial ribosomal protein bS21 family.</text>
</comment>
<comment type="sequence caution" evidence="3">
    <conflict type="erroneous initiation">
        <sequence resource="EMBL-CDS" id="AAZ51215"/>
    </conflict>
</comment>
<organism>
    <name type="scientific">Streptococcus pyogenes serotype M1</name>
    <dbReference type="NCBI Taxonomy" id="301447"/>
    <lineage>
        <taxon>Bacteria</taxon>
        <taxon>Bacillati</taxon>
        <taxon>Bacillota</taxon>
        <taxon>Bacilli</taxon>
        <taxon>Lactobacillales</taxon>
        <taxon>Streptococcaceae</taxon>
        <taxon>Streptococcus</taxon>
    </lineage>
</organism>
<gene>
    <name evidence="1" type="primary">rpsU</name>
    <name type="ordered locus">SPy_0779</name>
    <name type="ordered locus">M5005_Spy0597</name>
</gene>
<accession>P66526</accession>
<accession>Q48ZK3</accession>
<accession>Q9A0H1</accession>
<evidence type="ECO:0000255" key="1">
    <source>
        <dbReference type="HAMAP-Rule" id="MF_00358"/>
    </source>
</evidence>
<evidence type="ECO:0000256" key="2">
    <source>
        <dbReference type="SAM" id="MobiDB-lite"/>
    </source>
</evidence>
<evidence type="ECO:0000305" key="3"/>
<feature type="chain" id="PRO_0000178383" description="Small ribosomal subunit protein bS21">
    <location>
        <begin position="1"/>
        <end position="58"/>
    </location>
</feature>
<feature type="region of interest" description="Disordered" evidence="2">
    <location>
        <begin position="36"/>
        <end position="58"/>
    </location>
</feature>
<feature type="compositionally biased region" description="Basic residues" evidence="2">
    <location>
        <begin position="43"/>
        <end position="58"/>
    </location>
</feature>
<dbReference type="EMBL" id="AE004092">
    <property type="protein sequence ID" value="AAK33719.1"/>
    <property type="molecule type" value="Genomic_DNA"/>
</dbReference>
<dbReference type="EMBL" id="CP000017">
    <property type="protein sequence ID" value="AAZ51215.1"/>
    <property type="status" value="ALT_INIT"/>
    <property type="molecule type" value="Genomic_DNA"/>
</dbReference>
<dbReference type="RefSeq" id="NP_268998.1">
    <property type="nucleotide sequence ID" value="NC_002737.2"/>
</dbReference>
<dbReference type="SMR" id="P66526"/>
<dbReference type="PaxDb" id="1314-HKU360_00608"/>
<dbReference type="KEGG" id="spy:SPy_0779"/>
<dbReference type="KEGG" id="spz:M5005_Spy0597"/>
<dbReference type="PATRIC" id="fig|160490.10.peg.665"/>
<dbReference type="HOGENOM" id="CLU_159258_3_2_9"/>
<dbReference type="OMA" id="HQHFEKP"/>
<dbReference type="PRO" id="PR:P66526"/>
<dbReference type="Proteomes" id="UP000000750">
    <property type="component" value="Chromosome"/>
</dbReference>
<dbReference type="GO" id="GO:1990904">
    <property type="term" value="C:ribonucleoprotein complex"/>
    <property type="evidence" value="ECO:0007669"/>
    <property type="project" value="UniProtKB-KW"/>
</dbReference>
<dbReference type="GO" id="GO:0005840">
    <property type="term" value="C:ribosome"/>
    <property type="evidence" value="ECO:0007669"/>
    <property type="project" value="UniProtKB-KW"/>
</dbReference>
<dbReference type="GO" id="GO:0003735">
    <property type="term" value="F:structural constituent of ribosome"/>
    <property type="evidence" value="ECO:0007669"/>
    <property type="project" value="InterPro"/>
</dbReference>
<dbReference type="GO" id="GO:0006412">
    <property type="term" value="P:translation"/>
    <property type="evidence" value="ECO:0007669"/>
    <property type="project" value="UniProtKB-UniRule"/>
</dbReference>
<dbReference type="Gene3D" id="1.20.5.1150">
    <property type="entry name" value="Ribosomal protein S8"/>
    <property type="match status" value="1"/>
</dbReference>
<dbReference type="HAMAP" id="MF_00358">
    <property type="entry name" value="Ribosomal_bS21"/>
    <property type="match status" value="1"/>
</dbReference>
<dbReference type="InterPro" id="IPR001911">
    <property type="entry name" value="Ribosomal_bS21"/>
</dbReference>
<dbReference type="InterPro" id="IPR018278">
    <property type="entry name" value="Ribosomal_bS21_CS"/>
</dbReference>
<dbReference type="InterPro" id="IPR038380">
    <property type="entry name" value="Ribosomal_bS21_sf"/>
</dbReference>
<dbReference type="NCBIfam" id="TIGR00030">
    <property type="entry name" value="S21p"/>
    <property type="match status" value="1"/>
</dbReference>
<dbReference type="PANTHER" id="PTHR21109">
    <property type="entry name" value="MITOCHONDRIAL 28S RIBOSOMAL PROTEIN S21"/>
    <property type="match status" value="1"/>
</dbReference>
<dbReference type="PANTHER" id="PTHR21109:SF22">
    <property type="entry name" value="SMALL RIBOSOMAL SUBUNIT PROTEIN BS21"/>
    <property type="match status" value="1"/>
</dbReference>
<dbReference type="Pfam" id="PF01165">
    <property type="entry name" value="Ribosomal_S21"/>
    <property type="match status" value="1"/>
</dbReference>
<dbReference type="PRINTS" id="PR00976">
    <property type="entry name" value="RIBOSOMALS21"/>
</dbReference>
<dbReference type="PROSITE" id="PS01181">
    <property type="entry name" value="RIBOSOMAL_S21"/>
    <property type="match status" value="1"/>
</dbReference>
<name>RS21_STRP1</name>
<reference key="1">
    <citation type="journal article" date="2001" name="Proc. Natl. Acad. Sci. U.S.A.">
        <title>Complete genome sequence of an M1 strain of Streptococcus pyogenes.</title>
        <authorList>
            <person name="Ferretti J.J."/>
            <person name="McShan W.M."/>
            <person name="Ajdic D.J."/>
            <person name="Savic D.J."/>
            <person name="Savic G."/>
            <person name="Lyon K."/>
            <person name="Primeaux C."/>
            <person name="Sezate S."/>
            <person name="Suvorov A.N."/>
            <person name="Kenton S."/>
            <person name="Lai H.S."/>
            <person name="Lin S.P."/>
            <person name="Qian Y."/>
            <person name="Jia H.G."/>
            <person name="Najar F.Z."/>
            <person name="Ren Q."/>
            <person name="Zhu H."/>
            <person name="Song L."/>
            <person name="White J."/>
            <person name="Yuan X."/>
            <person name="Clifton S.W."/>
            <person name="Roe B.A."/>
            <person name="McLaughlin R.E."/>
        </authorList>
    </citation>
    <scope>NUCLEOTIDE SEQUENCE [LARGE SCALE GENOMIC DNA]</scope>
    <source>
        <strain>ATCC 700294 / SF370 / Serotype M1</strain>
    </source>
</reference>
<reference key="2">
    <citation type="journal article" date="2005" name="J. Infect. Dis.">
        <title>Evolutionary origin and emergence of a highly successful clone of serotype M1 group A Streptococcus involved multiple horizontal gene transfer events.</title>
        <authorList>
            <person name="Sumby P."/>
            <person name="Porcella S.F."/>
            <person name="Madrigal A.G."/>
            <person name="Barbian K.D."/>
            <person name="Virtaneva K."/>
            <person name="Ricklefs S.M."/>
            <person name="Sturdevant D.E."/>
            <person name="Graham M.R."/>
            <person name="Vuopio-Varkila J."/>
            <person name="Hoe N.P."/>
            <person name="Musser J.M."/>
        </authorList>
    </citation>
    <scope>NUCLEOTIDE SEQUENCE [LARGE SCALE GENOMIC DNA]</scope>
    <source>
        <strain>ATCC BAA-947 / MGAS5005 / Serotype M1</strain>
    </source>
</reference>
<proteinExistence type="inferred from homology"/>
<protein>
    <recommendedName>
        <fullName evidence="1">Small ribosomal subunit protein bS21</fullName>
    </recommendedName>
    <alternativeName>
        <fullName evidence="3">30S ribosomal protein S21</fullName>
    </alternativeName>
</protein>
<keyword id="KW-1185">Reference proteome</keyword>
<keyword id="KW-0687">Ribonucleoprotein</keyword>
<keyword id="KW-0689">Ribosomal protein</keyword>
<sequence>MSKTVVRKNESLDDALRRFKRSVTKAGTLQESRKREFYEKPSVKRKRKSEAARKRKKF</sequence>